<accession>Q9LV17</accession>
<evidence type="ECO:0000255" key="1">
    <source>
        <dbReference type="PROSITE-ProRule" id="PRU00981"/>
    </source>
</evidence>
<evidence type="ECO:0000256" key="2">
    <source>
        <dbReference type="SAM" id="MobiDB-lite"/>
    </source>
</evidence>
<evidence type="ECO:0000305" key="3"/>
<protein>
    <recommendedName>
        <fullName>Transcription factor bHLH79</fullName>
    </recommendedName>
    <alternativeName>
        <fullName>Basic helix-loop-helix protein 79</fullName>
        <shortName>AtbHLH79</shortName>
        <shortName>bHLH 79</shortName>
    </alternativeName>
    <alternativeName>
        <fullName>Transcription factor EN 81</fullName>
    </alternativeName>
    <alternativeName>
        <fullName>bHLH transcription factor bHLH079</fullName>
    </alternativeName>
</protein>
<organism>
    <name type="scientific">Arabidopsis thaliana</name>
    <name type="common">Mouse-ear cress</name>
    <dbReference type="NCBI Taxonomy" id="3702"/>
    <lineage>
        <taxon>Eukaryota</taxon>
        <taxon>Viridiplantae</taxon>
        <taxon>Streptophyta</taxon>
        <taxon>Embryophyta</taxon>
        <taxon>Tracheophyta</taxon>
        <taxon>Spermatophyta</taxon>
        <taxon>Magnoliopsida</taxon>
        <taxon>eudicotyledons</taxon>
        <taxon>Gunneridae</taxon>
        <taxon>Pentapetalae</taxon>
        <taxon>rosids</taxon>
        <taxon>malvids</taxon>
        <taxon>Brassicales</taxon>
        <taxon>Brassicaceae</taxon>
        <taxon>Camelineae</taxon>
        <taxon>Arabidopsis</taxon>
    </lineage>
</organism>
<comment type="subunit">
    <text evidence="3">Homodimer.</text>
</comment>
<comment type="interaction">
    <interactant intactId="EBI-15191993">
        <id>Q9LV17</id>
    </interactant>
    <interactant intactId="EBI-15198405">
        <id>Q93W88</id>
        <label>BHLH137</label>
    </interactant>
    <organismsDiffer>false</organismsDiffer>
    <experiments>3</experiments>
</comment>
<comment type="interaction">
    <interactant intactId="EBI-15191993">
        <id>Q9LV17</id>
    </interactant>
    <interactant intactId="EBI-4434374">
        <id>Q9C8Z9</id>
        <label>BHLH148</label>
    </interactant>
    <organismsDiffer>false</organismsDiffer>
    <experiments>5</experiments>
</comment>
<comment type="interaction">
    <interactant intactId="EBI-15191993">
        <id>Q9LV17</id>
    </interactant>
    <interactant intactId="EBI-15193669">
        <id>O80482</id>
        <label>BHLH149</label>
    </interactant>
    <organismsDiffer>false</organismsDiffer>
    <experiments>4</experiments>
</comment>
<comment type="interaction">
    <interactant intactId="EBI-15191993">
        <id>Q9LV17</id>
    </interactant>
    <interactant intactId="EBI-15194889">
        <id>Q3EAI1-2</id>
        <label>BHLH60</label>
    </interactant>
    <organismsDiffer>false</organismsDiffer>
    <experiments>3</experiments>
</comment>
<comment type="interaction">
    <interactant intactId="EBI-15191993">
        <id>Q9LV17</id>
    </interactant>
    <interactant intactId="EBI-15194255">
        <id>Q7XHI9</id>
        <label>BHLH84</label>
    </interactant>
    <organismsDiffer>false</organismsDiffer>
    <experiments>3</experiments>
</comment>
<comment type="interaction">
    <interactant intactId="EBI-15191993">
        <id>Q9LV17</id>
    </interactant>
    <interactant intactId="EBI-1536734">
        <id>Q9LXD8</id>
        <label>HEC3</label>
    </interactant>
    <organismsDiffer>false</organismsDiffer>
    <experiments>3</experiments>
</comment>
<comment type="subcellular location">
    <subcellularLocation>
        <location evidence="1">Nucleus</location>
    </subcellularLocation>
</comment>
<feature type="chain" id="PRO_0000358771" description="Transcription factor bHLH79">
    <location>
        <begin position="1"/>
        <end position="281"/>
    </location>
</feature>
<feature type="domain" description="bHLH" evidence="1">
    <location>
        <begin position="159"/>
        <end position="209"/>
    </location>
</feature>
<feature type="region of interest" description="Disordered" evidence="2">
    <location>
        <begin position="47"/>
        <end position="167"/>
    </location>
</feature>
<feature type="compositionally biased region" description="Basic and acidic residues" evidence="2">
    <location>
        <begin position="77"/>
        <end position="88"/>
    </location>
</feature>
<feature type="compositionally biased region" description="Basic and acidic residues" evidence="2">
    <location>
        <begin position="138"/>
        <end position="152"/>
    </location>
</feature>
<reference key="1">
    <citation type="journal article" date="2000" name="DNA Res.">
        <title>Structural analysis of Arabidopsis thaliana chromosome 5. X. Sequence features of the regions of 3,076,755 bp covered by sixty P1 and TAC clones.</title>
        <authorList>
            <person name="Sato S."/>
            <person name="Nakamura Y."/>
            <person name="Kaneko T."/>
            <person name="Katoh T."/>
            <person name="Asamizu E."/>
            <person name="Kotani H."/>
            <person name="Tabata S."/>
        </authorList>
    </citation>
    <scope>NUCLEOTIDE SEQUENCE [LARGE SCALE GENOMIC DNA]</scope>
    <source>
        <strain>cv. Columbia</strain>
    </source>
</reference>
<reference key="2">
    <citation type="journal article" date="2017" name="Plant J.">
        <title>Araport11: a complete reannotation of the Arabidopsis thaliana reference genome.</title>
        <authorList>
            <person name="Cheng C.Y."/>
            <person name="Krishnakumar V."/>
            <person name="Chan A.P."/>
            <person name="Thibaud-Nissen F."/>
            <person name="Schobel S."/>
            <person name="Town C.D."/>
        </authorList>
    </citation>
    <scope>GENOME REANNOTATION</scope>
    <source>
        <strain>cv. Columbia</strain>
    </source>
</reference>
<reference key="3">
    <citation type="journal article" date="2003" name="Science">
        <title>Empirical analysis of transcriptional activity in the Arabidopsis genome.</title>
        <authorList>
            <person name="Yamada K."/>
            <person name="Lim J."/>
            <person name="Dale J.M."/>
            <person name="Chen H."/>
            <person name="Shinn P."/>
            <person name="Palm C.J."/>
            <person name="Southwick A.M."/>
            <person name="Wu H.C."/>
            <person name="Kim C.J."/>
            <person name="Nguyen M."/>
            <person name="Pham P.K."/>
            <person name="Cheuk R.F."/>
            <person name="Karlin-Newmann G."/>
            <person name="Liu S.X."/>
            <person name="Lam B."/>
            <person name="Sakano H."/>
            <person name="Wu T."/>
            <person name="Yu G."/>
            <person name="Miranda M."/>
            <person name="Quach H.L."/>
            <person name="Tripp M."/>
            <person name="Chang C.H."/>
            <person name="Lee J.M."/>
            <person name="Toriumi M.J."/>
            <person name="Chan M.M."/>
            <person name="Tang C.C."/>
            <person name="Onodera C.S."/>
            <person name="Deng J.M."/>
            <person name="Akiyama K."/>
            <person name="Ansari Y."/>
            <person name="Arakawa T."/>
            <person name="Banh J."/>
            <person name="Banno F."/>
            <person name="Bowser L."/>
            <person name="Brooks S.Y."/>
            <person name="Carninci P."/>
            <person name="Chao Q."/>
            <person name="Choy N."/>
            <person name="Enju A."/>
            <person name="Goldsmith A.D."/>
            <person name="Gurjal M."/>
            <person name="Hansen N.F."/>
            <person name="Hayashizaki Y."/>
            <person name="Johnson-Hopson C."/>
            <person name="Hsuan V.W."/>
            <person name="Iida K."/>
            <person name="Karnes M."/>
            <person name="Khan S."/>
            <person name="Koesema E."/>
            <person name="Ishida J."/>
            <person name="Jiang P.X."/>
            <person name="Jones T."/>
            <person name="Kawai J."/>
            <person name="Kamiya A."/>
            <person name="Meyers C."/>
            <person name="Nakajima M."/>
            <person name="Narusaka M."/>
            <person name="Seki M."/>
            <person name="Sakurai T."/>
            <person name="Satou M."/>
            <person name="Tamse R."/>
            <person name="Vaysberg M."/>
            <person name="Wallender E.K."/>
            <person name="Wong C."/>
            <person name="Yamamura Y."/>
            <person name="Yuan S."/>
            <person name="Shinozaki K."/>
            <person name="Davis R.W."/>
            <person name="Theologis A."/>
            <person name="Ecker J.R."/>
        </authorList>
    </citation>
    <scope>NUCLEOTIDE SEQUENCE [LARGE SCALE MRNA]</scope>
    <source>
        <strain>cv. Columbia</strain>
    </source>
</reference>
<reference key="4">
    <citation type="submission" date="2002-03" db="EMBL/GenBank/DDBJ databases">
        <title>Full-length cDNA from Arabidopsis thaliana.</title>
        <authorList>
            <person name="Brover V.V."/>
            <person name="Troukhan M.E."/>
            <person name="Alexandrov N.A."/>
            <person name="Lu Y.-P."/>
            <person name="Flavell R.B."/>
            <person name="Feldmann K.A."/>
        </authorList>
    </citation>
    <scope>NUCLEOTIDE SEQUENCE [LARGE SCALE MRNA]</scope>
</reference>
<reference key="5">
    <citation type="journal article" date="2003" name="Mol. Biol. Evol.">
        <title>The basic helix-loop-helix transcription factor family in plants: a genome-wide study of protein structure and functional diversity.</title>
        <authorList>
            <person name="Heim M.A."/>
            <person name="Jakoby M."/>
            <person name="Werber M."/>
            <person name="Martin C."/>
            <person name="Weisshaar B."/>
            <person name="Bailey P.C."/>
        </authorList>
    </citation>
    <scope>NUCLEOTIDE SEQUENCE [MRNA] OF 188-281</scope>
    <scope>GENE FAMILY</scope>
    <scope>NOMENCLATURE</scope>
    <source>
        <strain>cv. Columbia</strain>
    </source>
</reference>
<reference key="6">
    <citation type="journal article" date="2003" name="Plant Cell">
        <title>The Arabidopsis basic/helix-loop-helix transcription factor family.</title>
        <authorList>
            <person name="Toledo-Ortiz G."/>
            <person name="Huq E."/>
            <person name="Quail P.H."/>
        </authorList>
    </citation>
    <scope>GENE FAMILY</scope>
</reference>
<reference key="7">
    <citation type="journal article" date="2003" name="Plant Cell">
        <title>Update on the basic helix-loop-helix transcription factor gene family in Arabidopsis thaliana.</title>
        <authorList>
            <person name="Bailey P.C."/>
            <person name="Martin C."/>
            <person name="Toledo-Ortiz G."/>
            <person name="Quail P.H."/>
            <person name="Huq E."/>
            <person name="Heim M.A."/>
            <person name="Jakoby M."/>
            <person name="Werber M."/>
            <person name="Weisshaar B."/>
        </authorList>
    </citation>
    <scope>GENE FAMILY</scope>
    <scope>NOMENCLATURE</scope>
</reference>
<gene>
    <name type="primary">BHLH79</name>
    <name type="synonym">EN81</name>
    <name type="ordered locus">At5g62610</name>
    <name type="ORF">MRG21.2</name>
</gene>
<sequence length="281" mass="30570">MDPPLVNDSSFSAANPSSYTLSEIWPFPVNDAVRSGLRLAVNSGRVFTRSEHSGNKDVSAAEESTVTDLTAGWGSRKTRDLNSEDDSSKMVSSSSSGNELKESGDKKRKLCGSESGNGDGSMRPEGETSSGGGGSKATEQKNKPEPPKDYIHVRARRGQATDRHSLAERARREKISEKMTALQDIIPGCNKIIGKALVLDEIINYIQSLQRQVEFLSMKLEVVNSGASTGPTIGVFPSGDLGTLPIDVHRTIYEQQEANETRVSQPEWLHMQVDGNFNRTT</sequence>
<dbReference type="EMBL" id="AB020751">
    <property type="protein sequence ID" value="BAA97208.1"/>
    <property type="molecule type" value="Genomic_DNA"/>
</dbReference>
<dbReference type="EMBL" id="CP002688">
    <property type="protein sequence ID" value="AED97630.1"/>
    <property type="molecule type" value="Genomic_DNA"/>
</dbReference>
<dbReference type="EMBL" id="CP002688">
    <property type="protein sequence ID" value="ANM68566.1"/>
    <property type="molecule type" value="Genomic_DNA"/>
</dbReference>
<dbReference type="EMBL" id="AY072104">
    <property type="protein sequence ID" value="AAL59926.1"/>
    <property type="molecule type" value="mRNA"/>
</dbReference>
<dbReference type="EMBL" id="AY123023">
    <property type="protein sequence ID" value="AAM67556.1"/>
    <property type="molecule type" value="mRNA"/>
</dbReference>
<dbReference type="EMBL" id="AY084578">
    <property type="protein sequence ID" value="AAM61143.1"/>
    <property type="molecule type" value="mRNA"/>
</dbReference>
<dbReference type="EMBL" id="AF488611">
    <property type="status" value="NOT_ANNOTATED_CDS"/>
    <property type="molecule type" value="mRNA"/>
</dbReference>
<dbReference type="RefSeq" id="NP_001330306.1">
    <property type="nucleotide sequence ID" value="NM_001345555.1"/>
</dbReference>
<dbReference type="RefSeq" id="NP_201067.1">
    <property type="nucleotide sequence ID" value="NM_125656.3"/>
</dbReference>
<dbReference type="SMR" id="Q9LV17"/>
<dbReference type="BioGRID" id="21625">
    <property type="interactions" value="28"/>
</dbReference>
<dbReference type="FunCoup" id="Q9LV17">
    <property type="interactions" value="264"/>
</dbReference>
<dbReference type="IntAct" id="Q9LV17">
    <property type="interactions" value="27"/>
</dbReference>
<dbReference type="STRING" id="3702.Q9LV17"/>
<dbReference type="GlyGen" id="Q9LV17">
    <property type="glycosylation" value="1 site"/>
</dbReference>
<dbReference type="PaxDb" id="3702-AT5G62610.1"/>
<dbReference type="ProteomicsDB" id="240467"/>
<dbReference type="EnsemblPlants" id="AT5G62610.1">
    <property type="protein sequence ID" value="AT5G62610.1"/>
    <property type="gene ID" value="AT5G62610"/>
</dbReference>
<dbReference type="EnsemblPlants" id="AT5G62610.2">
    <property type="protein sequence ID" value="AT5G62610.2"/>
    <property type="gene ID" value="AT5G62610"/>
</dbReference>
<dbReference type="GeneID" id="836382"/>
<dbReference type="Gramene" id="AT5G62610.1">
    <property type="protein sequence ID" value="AT5G62610.1"/>
    <property type="gene ID" value="AT5G62610"/>
</dbReference>
<dbReference type="Gramene" id="AT5G62610.2">
    <property type="protein sequence ID" value="AT5G62610.2"/>
    <property type="gene ID" value="AT5G62610"/>
</dbReference>
<dbReference type="KEGG" id="ath:AT5G62610"/>
<dbReference type="Araport" id="AT5G62610"/>
<dbReference type="TAIR" id="AT5G62610"/>
<dbReference type="eggNOG" id="ENOG502QSEM">
    <property type="taxonomic scope" value="Eukaryota"/>
</dbReference>
<dbReference type="HOGENOM" id="CLU_064391_1_0_1"/>
<dbReference type="InParanoid" id="Q9LV17"/>
<dbReference type="OMA" id="HMQVDGN"/>
<dbReference type="OrthoDB" id="678327at2759"/>
<dbReference type="PhylomeDB" id="Q9LV17"/>
<dbReference type="PRO" id="PR:Q9LV17"/>
<dbReference type="Proteomes" id="UP000006548">
    <property type="component" value="Chromosome 5"/>
</dbReference>
<dbReference type="ExpressionAtlas" id="Q9LV17">
    <property type="expression patterns" value="baseline and differential"/>
</dbReference>
<dbReference type="GO" id="GO:0005634">
    <property type="term" value="C:nucleus"/>
    <property type="evidence" value="ECO:0007669"/>
    <property type="project" value="UniProtKB-SubCell"/>
</dbReference>
<dbReference type="GO" id="GO:0003700">
    <property type="term" value="F:DNA-binding transcription factor activity"/>
    <property type="evidence" value="ECO:0000250"/>
    <property type="project" value="TAIR"/>
</dbReference>
<dbReference type="GO" id="GO:0046983">
    <property type="term" value="F:protein dimerization activity"/>
    <property type="evidence" value="ECO:0007669"/>
    <property type="project" value="InterPro"/>
</dbReference>
<dbReference type="GO" id="GO:0000976">
    <property type="term" value="F:transcription cis-regulatory region binding"/>
    <property type="evidence" value="ECO:0000353"/>
    <property type="project" value="TAIR"/>
</dbReference>
<dbReference type="GO" id="GO:0006355">
    <property type="term" value="P:regulation of DNA-templated transcription"/>
    <property type="evidence" value="ECO:0000304"/>
    <property type="project" value="TAIR"/>
</dbReference>
<dbReference type="CDD" id="cd18919">
    <property type="entry name" value="bHLH_AtBPE_like"/>
    <property type="match status" value="1"/>
</dbReference>
<dbReference type="FunFam" id="4.10.280.10:FF:000002">
    <property type="entry name" value="Basic helix-loop-helix transcription factor"/>
    <property type="match status" value="1"/>
</dbReference>
<dbReference type="Gene3D" id="4.10.280.10">
    <property type="entry name" value="Helix-loop-helix DNA-binding domain"/>
    <property type="match status" value="1"/>
</dbReference>
<dbReference type="InterPro" id="IPR011598">
    <property type="entry name" value="bHLH_dom"/>
</dbReference>
<dbReference type="InterPro" id="IPR024097">
    <property type="entry name" value="bHLH_ZIP_TF"/>
</dbReference>
<dbReference type="InterPro" id="IPR036638">
    <property type="entry name" value="HLH_DNA-bd_sf"/>
</dbReference>
<dbReference type="PANTHER" id="PTHR12565">
    <property type="entry name" value="STEROL REGULATORY ELEMENT-BINDING PROTEIN"/>
    <property type="match status" value="1"/>
</dbReference>
<dbReference type="PANTHER" id="PTHR12565:SF406">
    <property type="entry name" value="TRANSCRIPTION FACTOR BHLH79"/>
    <property type="match status" value="1"/>
</dbReference>
<dbReference type="Pfam" id="PF00010">
    <property type="entry name" value="HLH"/>
    <property type="match status" value="1"/>
</dbReference>
<dbReference type="SMART" id="SM00353">
    <property type="entry name" value="HLH"/>
    <property type="match status" value="1"/>
</dbReference>
<dbReference type="SUPFAM" id="SSF47459">
    <property type="entry name" value="HLH, helix-loop-helix DNA-binding domain"/>
    <property type="match status" value="1"/>
</dbReference>
<dbReference type="PROSITE" id="PS50888">
    <property type="entry name" value="BHLH"/>
    <property type="match status" value="1"/>
</dbReference>
<keyword id="KW-0238">DNA-binding</keyword>
<keyword id="KW-0539">Nucleus</keyword>
<keyword id="KW-1185">Reference proteome</keyword>
<keyword id="KW-0804">Transcription</keyword>
<keyword id="KW-0805">Transcription regulation</keyword>
<name>BH079_ARATH</name>
<proteinExistence type="evidence at protein level"/>